<proteinExistence type="evidence at protein level"/>
<keyword id="KW-0472">Membrane</keyword>
<keyword id="KW-0496">Mitochondrion</keyword>
<keyword id="KW-0999">Mitochondrion inner membrane</keyword>
<keyword id="KW-1185">Reference proteome</keyword>
<keyword id="KW-0812">Transmembrane</keyword>
<keyword id="KW-1133">Transmembrane helix</keyword>
<accession>Q059A4</accession>
<accession>A1Z9A0</accession>
<feature type="chain" id="PRO_0000461817" description="Transmembrane protein 186">
    <location>
        <begin position="1"/>
        <end position="204"/>
    </location>
</feature>
<feature type="topological domain" description="Mitochondrial matrix" evidence="4">
    <location>
        <begin position="1"/>
        <end position="69"/>
    </location>
</feature>
<feature type="transmembrane region" description="Helical" evidence="2">
    <location>
        <begin position="70"/>
        <end position="90"/>
    </location>
</feature>
<feature type="topological domain" description="Mitochondrial intermembrane" evidence="4">
    <location>
        <begin position="91"/>
        <end position="95"/>
    </location>
</feature>
<feature type="transmembrane region" description="Helical" evidence="2">
    <location>
        <begin position="96"/>
        <end position="116"/>
    </location>
</feature>
<feature type="topological domain" description="Mitochondrial matrix" evidence="4">
    <location>
        <begin position="117"/>
        <end position="204"/>
    </location>
</feature>
<gene>
    <name evidence="8" type="primary">Tmem186</name>
    <name evidence="7 8" type="ORF">CG4627</name>
    <name evidence="6" type="ORF">Dmel_CG4627</name>
</gene>
<reference evidence="9" key="1">
    <citation type="journal article" date="2000" name="Science">
        <title>The genome sequence of Drosophila melanogaster.</title>
        <authorList>
            <person name="Adams M.D."/>
            <person name="Celniker S.E."/>
            <person name="Holt R.A."/>
            <person name="Evans C.A."/>
            <person name="Gocayne J.D."/>
            <person name="Amanatides P.G."/>
            <person name="Scherer S.E."/>
            <person name="Li P.W."/>
            <person name="Hoskins R.A."/>
            <person name="Galle R.F."/>
            <person name="George R.A."/>
            <person name="Lewis S.E."/>
            <person name="Richards S."/>
            <person name="Ashburner M."/>
            <person name="Henderson S.N."/>
            <person name="Sutton G.G."/>
            <person name="Wortman J.R."/>
            <person name="Yandell M.D."/>
            <person name="Zhang Q."/>
            <person name="Chen L.X."/>
            <person name="Brandon R.C."/>
            <person name="Rogers Y.-H.C."/>
            <person name="Blazej R.G."/>
            <person name="Champe M."/>
            <person name="Pfeiffer B.D."/>
            <person name="Wan K.H."/>
            <person name="Doyle C."/>
            <person name="Baxter E.G."/>
            <person name="Helt G."/>
            <person name="Nelson C.R."/>
            <person name="Miklos G.L.G."/>
            <person name="Abril J.F."/>
            <person name="Agbayani A."/>
            <person name="An H.-J."/>
            <person name="Andrews-Pfannkoch C."/>
            <person name="Baldwin D."/>
            <person name="Ballew R.M."/>
            <person name="Basu A."/>
            <person name="Baxendale J."/>
            <person name="Bayraktaroglu L."/>
            <person name="Beasley E.M."/>
            <person name="Beeson K.Y."/>
            <person name="Benos P.V."/>
            <person name="Berman B.P."/>
            <person name="Bhandari D."/>
            <person name="Bolshakov S."/>
            <person name="Borkova D."/>
            <person name="Botchan M.R."/>
            <person name="Bouck J."/>
            <person name="Brokstein P."/>
            <person name="Brottier P."/>
            <person name="Burtis K.C."/>
            <person name="Busam D.A."/>
            <person name="Butler H."/>
            <person name="Cadieu E."/>
            <person name="Center A."/>
            <person name="Chandra I."/>
            <person name="Cherry J.M."/>
            <person name="Cawley S."/>
            <person name="Dahlke C."/>
            <person name="Davenport L.B."/>
            <person name="Davies P."/>
            <person name="de Pablos B."/>
            <person name="Delcher A."/>
            <person name="Deng Z."/>
            <person name="Mays A.D."/>
            <person name="Dew I."/>
            <person name="Dietz S.M."/>
            <person name="Dodson K."/>
            <person name="Doup L.E."/>
            <person name="Downes M."/>
            <person name="Dugan-Rocha S."/>
            <person name="Dunkov B.C."/>
            <person name="Dunn P."/>
            <person name="Durbin K.J."/>
            <person name="Evangelista C.C."/>
            <person name="Ferraz C."/>
            <person name="Ferriera S."/>
            <person name="Fleischmann W."/>
            <person name="Fosler C."/>
            <person name="Gabrielian A.E."/>
            <person name="Garg N.S."/>
            <person name="Gelbart W.M."/>
            <person name="Glasser K."/>
            <person name="Glodek A."/>
            <person name="Gong F."/>
            <person name="Gorrell J.H."/>
            <person name="Gu Z."/>
            <person name="Guan P."/>
            <person name="Harris M."/>
            <person name="Harris N.L."/>
            <person name="Harvey D.A."/>
            <person name="Heiman T.J."/>
            <person name="Hernandez J.R."/>
            <person name="Houck J."/>
            <person name="Hostin D."/>
            <person name="Houston K.A."/>
            <person name="Howland T.J."/>
            <person name="Wei M.-H."/>
            <person name="Ibegwam C."/>
            <person name="Jalali M."/>
            <person name="Kalush F."/>
            <person name="Karpen G.H."/>
            <person name="Ke Z."/>
            <person name="Kennison J.A."/>
            <person name="Ketchum K.A."/>
            <person name="Kimmel B.E."/>
            <person name="Kodira C.D."/>
            <person name="Kraft C.L."/>
            <person name="Kravitz S."/>
            <person name="Kulp D."/>
            <person name="Lai Z."/>
            <person name="Lasko P."/>
            <person name="Lei Y."/>
            <person name="Levitsky A.A."/>
            <person name="Li J.H."/>
            <person name="Li Z."/>
            <person name="Liang Y."/>
            <person name="Lin X."/>
            <person name="Liu X."/>
            <person name="Mattei B."/>
            <person name="McIntosh T.C."/>
            <person name="McLeod M.P."/>
            <person name="McPherson D."/>
            <person name="Merkulov G."/>
            <person name="Milshina N.V."/>
            <person name="Mobarry C."/>
            <person name="Morris J."/>
            <person name="Moshrefi A."/>
            <person name="Mount S.M."/>
            <person name="Moy M."/>
            <person name="Murphy B."/>
            <person name="Murphy L."/>
            <person name="Muzny D.M."/>
            <person name="Nelson D.L."/>
            <person name="Nelson D.R."/>
            <person name="Nelson K.A."/>
            <person name="Nixon K."/>
            <person name="Nusskern D.R."/>
            <person name="Pacleb J.M."/>
            <person name="Palazzolo M."/>
            <person name="Pittman G.S."/>
            <person name="Pan S."/>
            <person name="Pollard J."/>
            <person name="Puri V."/>
            <person name="Reese M.G."/>
            <person name="Reinert K."/>
            <person name="Remington K."/>
            <person name="Saunders R.D.C."/>
            <person name="Scheeler F."/>
            <person name="Shen H."/>
            <person name="Shue B.C."/>
            <person name="Siden-Kiamos I."/>
            <person name="Simpson M."/>
            <person name="Skupski M.P."/>
            <person name="Smith T.J."/>
            <person name="Spier E."/>
            <person name="Spradling A.C."/>
            <person name="Stapleton M."/>
            <person name="Strong R."/>
            <person name="Sun E."/>
            <person name="Svirskas R."/>
            <person name="Tector C."/>
            <person name="Turner R."/>
            <person name="Venter E."/>
            <person name="Wang A.H."/>
            <person name="Wang X."/>
            <person name="Wang Z.-Y."/>
            <person name="Wassarman D.A."/>
            <person name="Weinstock G.M."/>
            <person name="Weissenbach J."/>
            <person name="Williams S.M."/>
            <person name="Woodage T."/>
            <person name="Worley K.C."/>
            <person name="Wu D."/>
            <person name="Yang S."/>
            <person name="Yao Q.A."/>
            <person name="Ye J."/>
            <person name="Yeh R.-F."/>
            <person name="Zaveri J.S."/>
            <person name="Zhan M."/>
            <person name="Zhang G."/>
            <person name="Zhao Q."/>
            <person name="Zheng L."/>
            <person name="Zheng X.H."/>
            <person name="Zhong F.N."/>
            <person name="Zhong W."/>
            <person name="Zhou X."/>
            <person name="Zhu S.C."/>
            <person name="Zhu X."/>
            <person name="Smith H.O."/>
            <person name="Gibbs R.A."/>
            <person name="Myers E.W."/>
            <person name="Rubin G.M."/>
            <person name="Venter J.C."/>
        </authorList>
    </citation>
    <scope>NUCLEOTIDE SEQUENCE [LARGE SCALE GENOMIC DNA]</scope>
    <source>
        <strain evidence="9">Berkeley</strain>
    </source>
</reference>
<reference evidence="9" key="2">
    <citation type="journal article" date="2002" name="Genome Biol.">
        <title>Annotation of the Drosophila melanogaster euchromatic genome: a systematic review.</title>
        <authorList>
            <person name="Misra S."/>
            <person name="Crosby M.A."/>
            <person name="Mungall C.J."/>
            <person name="Matthews B.B."/>
            <person name="Campbell K.S."/>
            <person name="Hradecky P."/>
            <person name="Huang Y."/>
            <person name="Kaminker J.S."/>
            <person name="Millburn G.H."/>
            <person name="Prochnik S.E."/>
            <person name="Smith C.D."/>
            <person name="Tupy J.L."/>
            <person name="Whitfield E.J."/>
            <person name="Bayraktaroglu L."/>
            <person name="Berman B.P."/>
            <person name="Bettencourt B.R."/>
            <person name="Celniker S.E."/>
            <person name="de Grey A.D.N.J."/>
            <person name="Drysdale R.A."/>
            <person name="Harris N.L."/>
            <person name="Richter J."/>
            <person name="Russo S."/>
            <person name="Schroeder A.J."/>
            <person name="Shu S.Q."/>
            <person name="Stapleton M."/>
            <person name="Yamada C."/>
            <person name="Ashburner M."/>
            <person name="Gelbart W.M."/>
            <person name="Rubin G.M."/>
            <person name="Lewis S.E."/>
        </authorList>
    </citation>
    <scope>GENOME REANNOTATION</scope>
    <source>
        <strain evidence="9">Berkeley</strain>
    </source>
</reference>
<reference evidence="7" key="3">
    <citation type="submission" date="2006-10" db="EMBL/GenBank/DDBJ databases">
        <authorList>
            <person name="Stapleton M."/>
            <person name="Carlson J."/>
            <person name="Frise E."/>
            <person name="Kapadia B."/>
            <person name="Park S."/>
            <person name="Wan K."/>
            <person name="Yu C."/>
            <person name="Celniker S."/>
        </authorList>
    </citation>
    <scope>NUCLEOTIDE SEQUENCE [LARGE SCALE MRNA]</scope>
    <source>
        <strain evidence="7">Berkeley</strain>
    </source>
</reference>
<reference evidence="4" key="4">
    <citation type="journal article" date="2021" name="IScience">
        <title>Dissecting the concordant and disparate roles of NDUFAF3 and NDUFAF4 in mitochondrial complex I biogenesis.</title>
        <authorList>
            <person name="Murari A."/>
            <person name="Rhooms S.K."/>
            <person name="Garcia C."/>
            <person name="Liu T."/>
            <person name="Li H."/>
            <person name="Mishra B."/>
            <person name="Deshong C."/>
            <person name="Owusu-Ansah E."/>
        </authorList>
    </citation>
    <scope>FUNCTION</scope>
    <scope>INTERACTION WITH COMPLEX 1</scope>
</reference>
<dbReference type="EMBL" id="AE013599">
    <property type="protein sequence ID" value="AAF58408.2"/>
    <property type="molecule type" value="Genomic_DNA"/>
</dbReference>
<dbReference type="EMBL" id="BT029064">
    <property type="protein sequence ID" value="ABJ16997.1"/>
    <property type="molecule type" value="mRNA"/>
</dbReference>
<dbReference type="RefSeq" id="NP_610846.2">
    <property type="nucleotide sequence ID" value="NM_137002.4"/>
</dbReference>
<dbReference type="FunCoup" id="Q059A4">
    <property type="interactions" value="2006"/>
</dbReference>
<dbReference type="STRING" id="7227.FBpp0086851"/>
<dbReference type="PaxDb" id="7227-FBpp0086851"/>
<dbReference type="DNASU" id="36457"/>
<dbReference type="EnsemblMetazoa" id="FBtr0087738">
    <property type="protein sequence ID" value="FBpp0086851"/>
    <property type="gene ID" value="FBgn0033808"/>
</dbReference>
<dbReference type="GeneID" id="36457"/>
<dbReference type="KEGG" id="dme:Dmel_CG4627"/>
<dbReference type="UCSC" id="CG4627-RA">
    <property type="organism name" value="d. melanogaster"/>
</dbReference>
<dbReference type="AGR" id="FB:FBgn0033808"/>
<dbReference type="FlyBase" id="FBgn0033808">
    <property type="gene designation" value="Tmem186"/>
</dbReference>
<dbReference type="VEuPathDB" id="VectorBase:FBgn0033808"/>
<dbReference type="eggNOG" id="ENOG502S11D">
    <property type="taxonomic scope" value="Eukaryota"/>
</dbReference>
<dbReference type="GeneTree" id="ENSGT00390000000087"/>
<dbReference type="HOGENOM" id="CLU_112179_0_0_1"/>
<dbReference type="InParanoid" id="Q059A4"/>
<dbReference type="OMA" id="WRTVYSM"/>
<dbReference type="OrthoDB" id="6147888at2759"/>
<dbReference type="Reactome" id="R-DME-611105">
    <property type="pathway name" value="Respiratory electron transport"/>
</dbReference>
<dbReference type="Reactome" id="R-DME-6799198">
    <property type="pathway name" value="Complex I biogenesis"/>
</dbReference>
<dbReference type="BioGRID-ORCS" id="36457">
    <property type="hits" value="0 hits in 1 CRISPR screen"/>
</dbReference>
<dbReference type="ChiTaRS" id="CG4627">
    <property type="organism name" value="fly"/>
</dbReference>
<dbReference type="Proteomes" id="UP000000803">
    <property type="component" value="Chromosome 2R"/>
</dbReference>
<dbReference type="Bgee" id="FBgn0033808">
    <property type="expression patterns" value="Expressed in posterior endoderm (Drosophila) and 74 other cell types or tissues"/>
</dbReference>
<dbReference type="GO" id="GO:0005743">
    <property type="term" value="C:mitochondrial inner membrane"/>
    <property type="evidence" value="ECO:0007669"/>
    <property type="project" value="UniProtKB-SubCell"/>
</dbReference>
<dbReference type="GO" id="GO:0005739">
    <property type="term" value="C:mitochondrion"/>
    <property type="evidence" value="ECO:0000314"/>
    <property type="project" value="FlyBase"/>
</dbReference>
<dbReference type="GO" id="GO:0032981">
    <property type="term" value="P:mitochondrial respiratory chain complex I assembly"/>
    <property type="evidence" value="ECO:0000250"/>
    <property type="project" value="FlyBase"/>
</dbReference>
<dbReference type="InterPro" id="IPR026571">
    <property type="entry name" value="Tmem186"/>
</dbReference>
<dbReference type="InterPro" id="IPR045325">
    <property type="entry name" value="TMEM70/TMEM186/TMEM223"/>
</dbReference>
<dbReference type="PANTHER" id="PTHR13603">
    <property type="entry name" value="TRANSMEMBRANE PROTEIN 186"/>
    <property type="match status" value="1"/>
</dbReference>
<dbReference type="PANTHER" id="PTHR13603:SF1">
    <property type="entry name" value="TRANSMEMBRANE PROTEIN 186"/>
    <property type="match status" value="1"/>
</dbReference>
<dbReference type="Pfam" id="PF06979">
    <property type="entry name" value="TMEM70"/>
    <property type="match status" value="1"/>
</dbReference>
<evidence type="ECO:0000250" key="1">
    <source>
        <dbReference type="UniProtKB" id="Q96B77"/>
    </source>
</evidence>
<evidence type="ECO:0000255" key="2"/>
<evidence type="ECO:0000269" key="3">
    <source>
    </source>
</evidence>
<evidence type="ECO:0000305" key="4"/>
<evidence type="ECO:0000305" key="5">
    <source>
    </source>
</evidence>
<evidence type="ECO:0000312" key="6">
    <source>
        <dbReference type="EMBL" id="AAF58408.2"/>
    </source>
</evidence>
<evidence type="ECO:0000312" key="7">
    <source>
        <dbReference type="EMBL" id="ABJ16997.1"/>
    </source>
</evidence>
<evidence type="ECO:0000312" key="8">
    <source>
        <dbReference type="FlyBase" id="FBgn0033808"/>
    </source>
</evidence>
<evidence type="ECO:0000312" key="9">
    <source>
        <dbReference type="Proteomes" id="UP000000803"/>
    </source>
</evidence>
<name>TM186_DROME</name>
<protein>
    <recommendedName>
        <fullName evidence="8">Transmembrane protein 186</fullName>
    </recommendedName>
</protein>
<comment type="function">
    <text evidence="5">As part of the MCIA complex, required for efficient assembly of the mitochondrial complex I.</text>
</comment>
<comment type="subunit">
    <text evidence="3">Associates with mitochondrial complex I assembly intermediates during its biogenesis.</text>
</comment>
<comment type="subcellular location">
    <subcellularLocation>
        <location evidence="1">Mitochondrion inner membrane</location>
        <topology evidence="2">Multi-pass membrane protein</topology>
    </subcellularLocation>
</comment>
<comment type="similarity">
    <text evidence="4">Belongs to the TMEM186 family.</text>
</comment>
<sequence>MLELLCRVSPARLPWRSCMSLAIQPAQRRRFATEAAGKRTETEKSAFTEWRTVYSMPGIRLVAALSRLKVYQAVITAAGTPIVFALGSAGQLSTDALAIYAAIGVTGLITLTLASYASSNLVGFIYVNEEQDLLKLAYVDFWGRRQETLIETEDLLPSWEQGSPSRLRFVSPICLRSDSKRRYKLLNRFGHVSDRQLFEGLFGN</sequence>
<organism evidence="9">
    <name type="scientific">Drosophila melanogaster</name>
    <name type="common">Fruit fly</name>
    <dbReference type="NCBI Taxonomy" id="7227"/>
    <lineage>
        <taxon>Eukaryota</taxon>
        <taxon>Metazoa</taxon>
        <taxon>Ecdysozoa</taxon>
        <taxon>Arthropoda</taxon>
        <taxon>Hexapoda</taxon>
        <taxon>Insecta</taxon>
        <taxon>Pterygota</taxon>
        <taxon>Neoptera</taxon>
        <taxon>Endopterygota</taxon>
        <taxon>Diptera</taxon>
        <taxon>Brachycera</taxon>
        <taxon>Muscomorpha</taxon>
        <taxon>Ephydroidea</taxon>
        <taxon>Drosophilidae</taxon>
        <taxon>Drosophila</taxon>
        <taxon>Sophophora</taxon>
    </lineage>
</organism>